<reference key="1">
    <citation type="journal article" date="1995" name="Science">
        <title>The minimal gene complement of Mycoplasma genitalium.</title>
        <authorList>
            <person name="Fraser C.M."/>
            <person name="Gocayne J.D."/>
            <person name="White O."/>
            <person name="Adams M.D."/>
            <person name="Clayton R.A."/>
            <person name="Fleischmann R.D."/>
            <person name="Bult C.J."/>
            <person name="Kerlavage A.R."/>
            <person name="Sutton G.G."/>
            <person name="Kelley J.M."/>
            <person name="Fritchman J.L."/>
            <person name="Weidman J.F."/>
            <person name="Small K.V."/>
            <person name="Sandusky M."/>
            <person name="Fuhrmann J.L."/>
            <person name="Nguyen D.T."/>
            <person name="Utterback T.R."/>
            <person name="Saudek D.M."/>
            <person name="Phillips C.A."/>
            <person name="Merrick J.M."/>
            <person name="Tomb J.-F."/>
            <person name="Dougherty B.A."/>
            <person name="Bott K.F."/>
            <person name="Hu P.-C."/>
            <person name="Lucier T.S."/>
            <person name="Peterson S.N."/>
            <person name="Smith H.O."/>
            <person name="Hutchison C.A. III"/>
            <person name="Venter J.C."/>
        </authorList>
    </citation>
    <scope>NUCLEOTIDE SEQUENCE [LARGE SCALE GENOMIC DNA]</scope>
    <source>
        <strain>ATCC 33530 / DSM 19775 / NCTC 10195 / G37</strain>
    </source>
</reference>
<keyword id="KW-1185">Reference proteome</keyword>
<keyword id="KW-0687">Ribonucleoprotein</keyword>
<keyword id="KW-0689">Ribosomal protein</keyword>
<keyword id="KW-0694">RNA-binding</keyword>
<keyword id="KW-0699">rRNA-binding</keyword>
<organism>
    <name type="scientific">Mycoplasma genitalium (strain ATCC 33530 / DSM 19775 / NCTC 10195 / G37)</name>
    <name type="common">Mycoplasmoides genitalium</name>
    <dbReference type="NCBI Taxonomy" id="243273"/>
    <lineage>
        <taxon>Bacteria</taxon>
        <taxon>Bacillati</taxon>
        <taxon>Mycoplasmatota</taxon>
        <taxon>Mycoplasmoidales</taxon>
        <taxon>Mycoplasmoidaceae</taxon>
        <taxon>Mycoplasmoides</taxon>
    </lineage>
</organism>
<evidence type="ECO:0000250" key="1"/>
<evidence type="ECO:0000305" key="2"/>
<accession>P47401</accession>
<proteinExistence type="inferred from homology"/>
<comment type="function">
    <text evidence="1">Protein S19 forms a complex with S13 that binds strongly to the 16S ribosomal RNA.</text>
</comment>
<comment type="similarity">
    <text evidence="2">Belongs to the universal ribosomal protein uS19 family.</text>
</comment>
<feature type="chain" id="PRO_0000129860" description="Small ribosomal subunit protein uS19">
    <location>
        <begin position="1"/>
        <end position="87"/>
    </location>
</feature>
<dbReference type="EMBL" id="L43967">
    <property type="protein sequence ID" value="AAC71373.1"/>
    <property type="molecule type" value="Genomic_DNA"/>
</dbReference>
<dbReference type="PIR" id="B64217">
    <property type="entry name" value="B64217"/>
</dbReference>
<dbReference type="RefSeq" id="WP_009885839.1">
    <property type="nucleotide sequence ID" value="NC_000908.2"/>
</dbReference>
<dbReference type="SMR" id="P47401"/>
<dbReference type="FunCoup" id="P47401">
    <property type="interactions" value="200"/>
</dbReference>
<dbReference type="STRING" id="243273.MG_155"/>
<dbReference type="GeneID" id="88282288"/>
<dbReference type="KEGG" id="mge:MG_155"/>
<dbReference type="eggNOG" id="COG0185">
    <property type="taxonomic scope" value="Bacteria"/>
</dbReference>
<dbReference type="HOGENOM" id="CLU_144911_0_1_14"/>
<dbReference type="InParanoid" id="P47401"/>
<dbReference type="OrthoDB" id="9797833at2"/>
<dbReference type="BioCyc" id="MGEN243273:G1GJ2-179-MONOMER"/>
<dbReference type="Proteomes" id="UP000000807">
    <property type="component" value="Chromosome"/>
</dbReference>
<dbReference type="GO" id="GO:0005737">
    <property type="term" value="C:cytoplasm"/>
    <property type="evidence" value="ECO:0007669"/>
    <property type="project" value="UniProtKB-ARBA"/>
</dbReference>
<dbReference type="GO" id="GO:0015935">
    <property type="term" value="C:small ribosomal subunit"/>
    <property type="evidence" value="ECO:0007669"/>
    <property type="project" value="InterPro"/>
</dbReference>
<dbReference type="GO" id="GO:0019843">
    <property type="term" value="F:rRNA binding"/>
    <property type="evidence" value="ECO:0007669"/>
    <property type="project" value="UniProtKB-UniRule"/>
</dbReference>
<dbReference type="GO" id="GO:0003735">
    <property type="term" value="F:structural constituent of ribosome"/>
    <property type="evidence" value="ECO:0000318"/>
    <property type="project" value="GO_Central"/>
</dbReference>
<dbReference type="GO" id="GO:0000028">
    <property type="term" value="P:ribosomal small subunit assembly"/>
    <property type="evidence" value="ECO:0000318"/>
    <property type="project" value="GO_Central"/>
</dbReference>
<dbReference type="GO" id="GO:0006412">
    <property type="term" value="P:translation"/>
    <property type="evidence" value="ECO:0007669"/>
    <property type="project" value="UniProtKB-UniRule"/>
</dbReference>
<dbReference type="FunFam" id="3.30.860.10:FF:000001">
    <property type="entry name" value="30S ribosomal protein S19"/>
    <property type="match status" value="1"/>
</dbReference>
<dbReference type="Gene3D" id="3.30.860.10">
    <property type="entry name" value="30s Ribosomal Protein S19, Chain A"/>
    <property type="match status" value="1"/>
</dbReference>
<dbReference type="HAMAP" id="MF_00531">
    <property type="entry name" value="Ribosomal_uS19"/>
    <property type="match status" value="1"/>
</dbReference>
<dbReference type="InterPro" id="IPR002222">
    <property type="entry name" value="Ribosomal_uS19"/>
</dbReference>
<dbReference type="InterPro" id="IPR005732">
    <property type="entry name" value="Ribosomal_uS19_bac-type"/>
</dbReference>
<dbReference type="InterPro" id="IPR020934">
    <property type="entry name" value="Ribosomal_uS19_CS"/>
</dbReference>
<dbReference type="InterPro" id="IPR023575">
    <property type="entry name" value="Ribosomal_uS19_SF"/>
</dbReference>
<dbReference type="NCBIfam" id="TIGR01050">
    <property type="entry name" value="rpsS_bact"/>
    <property type="match status" value="1"/>
</dbReference>
<dbReference type="PANTHER" id="PTHR11880">
    <property type="entry name" value="RIBOSOMAL PROTEIN S19P FAMILY MEMBER"/>
    <property type="match status" value="1"/>
</dbReference>
<dbReference type="PANTHER" id="PTHR11880:SF8">
    <property type="entry name" value="SMALL RIBOSOMAL SUBUNIT PROTEIN US19M"/>
    <property type="match status" value="1"/>
</dbReference>
<dbReference type="Pfam" id="PF00203">
    <property type="entry name" value="Ribosomal_S19"/>
    <property type="match status" value="1"/>
</dbReference>
<dbReference type="PIRSF" id="PIRSF002144">
    <property type="entry name" value="Ribosomal_S19"/>
    <property type="match status" value="1"/>
</dbReference>
<dbReference type="PRINTS" id="PR00975">
    <property type="entry name" value="RIBOSOMALS19"/>
</dbReference>
<dbReference type="SUPFAM" id="SSF54570">
    <property type="entry name" value="Ribosomal protein S19"/>
    <property type="match status" value="1"/>
</dbReference>
<dbReference type="PROSITE" id="PS00323">
    <property type="entry name" value="RIBOSOMAL_S19"/>
    <property type="match status" value="1"/>
</dbReference>
<protein>
    <recommendedName>
        <fullName evidence="2">Small ribosomal subunit protein uS19</fullName>
    </recommendedName>
    <alternativeName>
        <fullName>30S ribosomal protein S19</fullName>
    </alternativeName>
</protein>
<gene>
    <name type="primary">rpsS</name>
    <name type="synonym">rps19</name>
    <name type="ordered locus">MG155</name>
</gene>
<sequence>MSRSSKKGAFVDAHLLKKVIEMNKQAKKKPIKTWSRRSTIFPEFVGNTFSVHNGKTFINVYVTDDMVGHKLGEFSPTRNFKQHTANR</sequence>
<name>RS19_MYCGE</name>